<protein>
    <recommendedName>
        <fullName evidence="1">tRNA uridine 5-carboxymethylaminomethyl modification enzyme MnmG</fullName>
    </recommendedName>
    <alternativeName>
        <fullName evidence="1">Glucose-inhibited division protein A</fullName>
    </alternativeName>
</protein>
<feature type="chain" id="PRO_1000016541" description="tRNA uridine 5-carboxymethylaminomethyl modification enzyme MnmG">
    <location>
        <begin position="1"/>
        <end position="629"/>
    </location>
</feature>
<feature type="binding site" evidence="1">
    <location>
        <begin position="13"/>
        <end position="18"/>
    </location>
    <ligand>
        <name>FAD</name>
        <dbReference type="ChEBI" id="CHEBI:57692"/>
    </ligand>
</feature>
<feature type="binding site" evidence="1">
    <location>
        <begin position="273"/>
        <end position="287"/>
    </location>
    <ligand>
        <name>NAD(+)</name>
        <dbReference type="ChEBI" id="CHEBI:57540"/>
    </ligand>
</feature>
<organism>
    <name type="scientific">Aeromonas salmonicida (strain A449)</name>
    <dbReference type="NCBI Taxonomy" id="382245"/>
    <lineage>
        <taxon>Bacteria</taxon>
        <taxon>Pseudomonadati</taxon>
        <taxon>Pseudomonadota</taxon>
        <taxon>Gammaproteobacteria</taxon>
        <taxon>Aeromonadales</taxon>
        <taxon>Aeromonadaceae</taxon>
        <taxon>Aeromonas</taxon>
    </lineage>
</organism>
<keyword id="KW-0963">Cytoplasm</keyword>
<keyword id="KW-0274">FAD</keyword>
<keyword id="KW-0285">Flavoprotein</keyword>
<keyword id="KW-0520">NAD</keyword>
<keyword id="KW-0819">tRNA processing</keyword>
<accession>A4STQ4</accession>
<dbReference type="EMBL" id="CP000644">
    <property type="protein sequence ID" value="ABO92276.1"/>
    <property type="molecule type" value="Genomic_DNA"/>
</dbReference>
<dbReference type="RefSeq" id="WP_005319602.1">
    <property type="nucleotide sequence ID" value="NC_009348.1"/>
</dbReference>
<dbReference type="SMR" id="A4STQ4"/>
<dbReference type="STRING" id="29491.GCA_000820065_00580"/>
<dbReference type="KEGG" id="asa:ASA_4361"/>
<dbReference type="PATRIC" id="fig|382245.13.peg.4319"/>
<dbReference type="eggNOG" id="COG0445">
    <property type="taxonomic scope" value="Bacteria"/>
</dbReference>
<dbReference type="HOGENOM" id="CLU_007831_2_2_6"/>
<dbReference type="Proteomes" id="UP000000225">
    <property type="component" value="Chromosome"/>
</dbReference>
<dbReference type="GO" id="GO:0005829">
    <property type="term" value="C:cytosol"/>
    <property type="evidence" value="ECO:0007669"/>
    <property type="project" value="TreeGrafter"/>
</dbReference>
<dbReference type="GO" id="GO:0050660">
    <property type="term" value="F:flavin adenine dinucleotide binding"/>
    <property type="evidence" value="ECO:0007669"/>
    <property type="project" value="UniProtKB-UniRule"/>
</dbReference>
<dbReference type="GO" id="GO:0030488">
    <property type="term" value="P:tRNA methylation"/>
    <property type="evidence" value="ECO:0007669"/>
    <property type="project" value="TreeGrafter"/>
</dbReference>
<dbReference type="GO" id="GO:0002098">
    <property type="term" value="P:tRNA wobble uridine modification"/>
    <property type="evidence" value="ECO:0007669"/>
    <property type="project" value="InterPro"/>
</dbReference>
<dbReference type="FunFam" id="1.10.10.1800:FF:000001">
    <property type="entry name" value="tRNA uridine 5-carboxymethylaminomethyl modification enzyme MnmG"/>
    <property type="match status" value="1"/>
</dbReference>
<dbReference type="FunFam" id="1.10.150.570:FF:000001">
    <property type="entry name" value="tRNA uridine 5-carboxymethylaminomethyl modification enzyme MnmG"/>
    <property type="match status" value="1"/>
</dbReference>
<dbReference type="FunFam" id="3.50.50.60:FF:000002">
    <property type="entry name" value="tRNA uridine 5-carboxymethylaminomethyl modification enzyme MnmG"/>
    <property type="match status" value="1"/>
</dbReference>
<dbReference type="FunFam" id="3.50.50.60:FF:000010">
    <property type="entry name" value="tRNA uridine 5-carboxymethylaminomethyl modification enzyme MnmG"/>
    <property type="match status" value="1"/>
</dbReference>
<dbReference type="Gene3D" id="3.50.50.60">
    <property type="entry name" value="FAD/NAD(P)-binding domain"/>
    <property type="match status" value="2"/>
</dbReference>
<dbReference type="Gene3D" id="1.10.150.570">
    <property type="entry name" value="GidA associated domain, C-terminal subdomain"/>
    <property type="match status" value="1"/>
</dbReference>
<dbReference type="Gene3D" id="1.10.10.1800">
    <property type="entry name" value="tRNA uridine 5-carboxymethylaminomethyl modification enzyme MnmG/GidA"/>
    <property type="match status" value="1"/>
</dbReference>
<dbReference type="HAMAP" id="MF_00129">
    <property type="entry name" value="MnmG_GidA"/>
    <property type="match status" value="1"/>
</dbReference>
<dbReference type="InterPro" id="IPR036188">
    <property type="entry name" value="FAD/NAD-bd_sf"/>
</dbReference>
<dbReference type="InterPro" id="IPR049312">
    <property type="entry name" value="GIDA_C_N"/>
</dbReference>
<dbReference type="InterPro" id="IPR004416">
    <property type="entry name" value="MnmG"/>
</dbReference>
<dbReference type="InterPro" id="IPR002218">
    <property type="entry name" value="MnmG-rel"/>
</dbReference>
<dbReference type="InterPro" id="IPR020595">
    <property type="entry name" value="MnmG-rel_CS"/>
</dbReference>
<dbReference type="InterPro" id="IPR026904">
    <property type="entry name" value="MnmG_C"/>
</dbReference>
<dbReference type="InterPro" id="IPR047001">
    <property type="entry name" value="MnmG_C_subdom"/>
</dbReference>
<dbReference type="InterPro" id="IPR044920">
    <property type="entry name" value="MnmG_C_subdom_sf"/>
</dbReference>
<dbReference type="InterPro" id="IPR040131">
    <property type="entry name" value="MnmG_N"/>
</dbReference>
<dbReference type="NCBIfam" id="TIGR00136">
    <property type="entry name" value="mnmG_gidA"/>
    <property type="match status" value="1"/>
</dbReference>
<dbReference type="PANTHER" id="PTHR11806">
    <property type="entry name" value="GLUCOSE INHIBITED DIVISION PROTEIN A"/>
    <property type="match status" value="1"/>
</dbReference>
<dbReference type="PANTHER" id="PTHR11806:SF0">
    <property type="entry name" value="PROTEIN MTO1 HOMOLOG, MITOCHONDRIAL"/>
    <property type="match status" value="1"/>
</dbReference>
<dbReference type="Pfam" id="PF01134">
    <property type="entry name" value="GIDA"/>
    <property type="match status" value="1"/>
</dbReference>
<dbReference type="Pfam" id="PF21680">
    <property type="entry name" value="GIDA_C_1st"/>
    <property type="match status" value="1"/>
</dbReference>
<dbReference type="Pfam" id="PF13932">
    <property type="entry name" value="SAM_GIDA_C"/>
    <property type="match status" value="1"/>
</dbReference>
<dbReference type="SMART" id="SM01228">
    <property type="entry name" value="GIDA_assoc_3"/>
    <property type="match status" value="1"/>
</dbReference>
<dbReference type="SUPFAM" id="SSF51905">
    <property type="entry name" value="FAD/NAD(P)-binding domain"/>
    <property type="match status" value="1"/>
</dbReference>
<dbReference type="PROSITE" id="PS01280">
    <property type="entry name" value="GIDA_1"/>
    <property type="match status" value="1"/>
</dbReference>
<dbReference type="PROSITE" id="PS01281">
    <property type="entry name" value="GIDA_2"/>
    <property type="match status" value="1"/>
</dbReference>
<gene>
    <name evidence="1" type="primary">mnmG</name>
    <name evidence="1" type="synonym">gidA</name>
    <name type="ordered locus">ASA_4361</name>
</gene>
<evidence type="ECO:0000255" key="1">
    <source>
        <dbReference type="HAMAP-Rule" id="MF_00129"/>
    </source>
</evidence>
<sequence>MQYHEQFDVIVVGGGHAGTEAATAAARMGLNTLLLTHNIDTLGHMSCNPAIGGIGKGHLVKEVDALGGIMARATDLAGIQFRTLNSSKGPAVRATRAQADRLLYKAVVRQMLENYPNLKIFQQACDDLIMDGDRVAGVVTQSGIRISGKTVVLTVGTFLNGLIHIGMENYKGGRAGDPPSIALAQRLREMPLRIDRLKTGTPPRIDARSVDLSVMQAQYGDDPRPVFSFIGDASQHPRQVPCYVTHTNERTHDVIRNNLDRSPMYAGVIEGIGPRYCPSIEDKITRFADKTAHQIFVEPEGLTTHELYPNGISTSLPFDVQVQIVRSIRGFENAHITRPGYAIEYDFFDPRDLKANMESKYIGNLFFAGQINGTTGYEEAAAQGLMAGLNAGLRAQDKDPWHPRRDQAYMGVMIDDLSTLGTREPYRMFTSRAEYRLLLREDNADLRLTAIGRELGLVDDERWGKFNIKMEQVELERQRMRSTWIHPQHPSLEAVNALVNTPLTREQNLEELLRRPEVTYDALMAIEGVGPALSDHAAADQVEIQIKYAGYIERQYDEVEKQLRNENTLLPLDMNYRDVNGLSNEVIAKLNDAKPETIGQASRISGITPAAISILLVHLKKHGLLRKTA</sequence>
<comment type="function">
    <text evidence="1">NAD-binding protein involved in the addition of a carboxymethylaminomethyl (cmnm) group at the wobble position (U34) of certain tRNAs, forming tRNA-cmnm(5)s(2)U34.</text>
</comment>
<comment type="cofactor">
    <cofactor evidence="1">
        <name>FAD</name>
        <dbReference type="ChEBI" id="CHEBI:57692"/>
    </cofactor>
</comment>
<comment type="subunit">
    <text evidence="1">Homodimer. Heterotetramer of two MnmE and two MnmG subunits.</text>
</comment>
<comment type="subcellular location">
    <subcellularLocation>
        <location evidence="1">Cytoplasm</location>
    </subcellularLocation>
</comment>
<comment type="similarity">
    <text evidence="1">Belongs to the MnmG family.</text>
</comment>
<reference key="1">
    <citation type="journal article" date="2008" name="BMC Genomics">
        <title>The genome of Aeromonas salmonicida subsp. salmonicida A449: insights into the evolution of a fish pathogen.</title>
        <authorList>
            <person name="Reith M.E."/>
            <person name="Singh R.K."/>
            <person name="Curtis B."/>
            <person name="Boyd J.M."/>
            <person name="Bouevitch A."/>
            <person name="Kimball J."/>
            <person name="Munholland J."/>
            <person name="Murphy C."/>
            <person name="Sarty D."/>
            <person name="Williams J."/>
            <person name="Nash J.H."/>
            <person name="Johnson S.C."/>
            <person name="Brown L.L."/>
        </authorList>
    </citation>
    <scope>NUCLEOTIDE SEQUENCE [LARGE SCALE GENOMIC DNA]</scope>
    <source>
        <strain>A449</strain>
    </source>
</reference>
<name>MNMG_AERS4</name>
<proteinExistence type="inferred from homology"/>